<dbReference type="EC" id="3.6.4.-" evidence="2"/>
<dbReference type="EMBL" id="X05392">
    <property type="protein sequence ID" value="CAA28979.1"/>
    <property type="molecule type" value="Genomic_DNA"/>
</dbReference>
<dbReference type="EMBL" id="BC073473">
    <property type="protein sequence ID" value="AAH73473.1"/>
    <property type="molecule type" value="mRNA"/>
</dbReference>
<dbReference type="EMBL" id="BC157412">
    <property type="protein sequence ID" value="AAI57413.1"/>
    <property type="molecule type" value="mRNA"/>
</dbReference>
<dbReference type="PIR" id="A29686">
    <property type="entry name" value="A29686"/>
</dbReference>
<dbReference type="RefSeq" id="NP_001090226.1">
    <property type="nucleotide sequence ID" value="NM_001096757.1"/>
</dbReference>
<dbReference type="SMR" id="P10995"/>
<dbReference type="DNASU" id="779129"/>
<dbReference type="GeneID" id="779129"/>
<dbReference type="KEGG" id="xla:779129"/>
<dbReference type="AGR" id="Xenbase:XB-GENE-22064001"/>
<dbReference type="CTD" id="779129"/>
<dbReference type="Xenbase" id="XB-GENE-22064001">
    <property type="gene designation" value="MGC75582.S"/>
</dbReference>
<dbReference type="OMA" id="FTTSAEF"/>
<dbReference type="OrthoDB" id="9922428at2759"/>
<dbReference type="Proteomes" id="UP000186698">
    <property type="component" value="Chromosome 1S"/>
</dbReference>
<dbReference type="Bgee" id="779129">
    <property type="expression patterns" value="Expressed in muscle tissue and 14 other cell types or tissues"/>
</dbReference>
<dbReference type="GO" id="GO:0015629">
    <property type="term" value="C:actin cytoskeleton"/>
    <property type="evidence" value="ECO:0000318"/>
    <property type="project" value="GO_Central"/>
</dbReference>
<dbReference type="GO" id="GO:0005737">
    <property type="term" value="C:cytoplasm"/>
    <property type="evidence" value="ECO:0007669"/>
    <property type="project" value="UniProtKB-KW"/>
</dbReference>
<dbReference type="GO" id="GO:0005524">
    <property type="term" value="F:ATP binding"/>
    <property type="evidence" value="ECO:0007669"/>
    <property type="project" value="UniProtKB-KW"/>
</dbReference>
<dbReference type="GO" id="GO:0016787">
    <property type="term" value="F:hydrolase activity"/>
    <property type="evidence" value="ECO:0007669"/>
    <property type="project" value="UniProtKB-KW"/>
</dbReference>
<dbReference type="CDD" id="cd10224">
    <property type="entry name" value="ASKHA_NBD_actin"/>
    <property type="match status" value="1"/>
</dbReference>
<dbReference type="FunFam" id="2.30.36.70:FF:000001">
    <property type="entry name" value="Actin, alpha skeletal muscle"/>
    <property type="match status" value="1"/>
</dbReference>
<dbReference type="FunFam" id="3.30.420.40:FF:000131">
    <property type="entry name" value="Actin, alpha skeletal muscle"/>
    <property type="match status" value="1"/>
</dbReference>
<dbReference type="FunFam" id="3.30.420.40:FF:000291">
    <property type="entry name" value="Actin, alpha skeletal muscle"/>
    <property type="match status" value="1"/>
</dbReference>
<dbReference type="FunFam" id="3.90.640.10:FF:000047">
    <property type="entry name" value="Actin, alpha skeletal muscle"/>
    <property type="match status" value="1"/>
</dbReference>
<dbReference type="FunFam" id="3.30.420.40:FF:000058">
    <property type="entry name" value="Putative actin-related protein 5"/>
    <property type="match status" value="1"/>
</dbReference>
<dbReference type="Gene3D" id="3.30.420.40">
    <property type="match status" value="2"/>
</dbReference>
<dbReference type="Gene3D" id="3.90.640.10">
    <property type="entry name" value="Actin, Chain A, domain 4"/>
    <property type="match status" value="1"/>
</dbReference>
<dbReference type="InterPro" id="IPR004000">
    <property type="entry name" value="Actin"/>
</dbReference>
<dbReference type="InterPro" id="IPR020902">
    <property type="entry name" value="Actin/actin-like_CS"/>
</dbReference>
<dbReference type="InterPro" id="IPR004001">
    <property type="entry name" value="Actin_CS"/>
</dbReference>
<dbReference type="InterPro" id="IPR043129">
    <property type="entry name" value="ATPase_NBD"/>
</dbReference>
<dbReference type="PANTHER" id="PTHR11937">
    <property type="entry name" value="ACTIN"/>
    <property type="match status" value="1"/>
</dbReference>
<dbReference type="Pfam" id="PF00022">
    <property type="entry name" value="Actin"/>
    <property type="match status" value="1"/>
</dbReference>
<dbReference type="PRINTS" id="PR00190">
    <property type="entry name" value="ACTIN"/>
</dbReference>
<dbReference type="SMART" id="SM00268">
    <property type="entry name" value="ACTIN"/>
    <property type="match status" value="1"/>
</dbReference>
<dbReference type="SUPFAM" id="SSF53067">
    <property type="entry name" value="Actin-like ATPase domain"/>
    <property type="match status" value="2"/>
</dbReference>
<dbReference type="PROSITE" id="PS00406">
    <property type="entry name" value="ACTINS_1"/>
    <property type="match status" value="1"/>
</dbReference>
<dbReference type="PROSITE" id="PS00432">
    <property type="entry name" value="ACTINS_2"/>
    <property type="match status" value="1"/>
</dbReference>
<dbReference type="PROSITE" id="PS01132">
    <property type="entry name" value="ACTINS_ACT_LIKE"/>
    <property type="match status" value="1"/>
</dbReference>
<feature type="propeptide" id="PRO_0000000822" description="Removed in mature form">
    <location>
        <begin position="1"/>
        <end position="2"/>
    </location>
</feature>
<feature type="chain" id="PRO_0000000823" description="Actin, alpha skeletal muscle 2">
    <location>
        <begin position="3"/>
        <end position="377"/>
    </location>
</feature>
<feature type="modified residue" description="N-acetylaspartate" evidence="1">
    <location>
        <position position="3"/>
    </location>
</feature>
<feature type="modified residue" description="Methionine (R)-sulfoxide" evidence="1">
    <location>
        <position position="46"/>
    </location>
</feature>
<feature type="modified residue" description="Methionine (R)-sulfoxide" evidence="1">
    <location>
        <position position="49"/>
    </location>
</feature>
<feature type="modified residue" description="Tele-methylhistidine" evidence="1">
    <location>
        <position position="75"/>
    </location>
</feature>
<sequence length="377" mass="41989">MCDDDETTALVCDNGSGLVKAGFAGDDAPRAVFPSIVGRPRHQGVMVGMGQKDSYVGDEAQSKRGILTLKYPIEHGIITNWDDMEKIWHHTFYNELRVAPEEHPTLLTEAPLNPKANREKMTQIMFETFNVPAMYVAIQAVLSLYASGRTTGIVLDSGDGVTHNVPIYEGYALPHAIMRLDLAGRDLTDYLMKILTERGYSFVTTAEREIVRDIKEKLCYVALDFENEMATAASSSSLEKSYELPDGQVITIGNERFRCPETLFQPSFIGMESAGIHETAYNSIMKCDIDIRKDLYANNVLSGGTTMYPGIADRMQKEITALAPSTMKIKIIAPPERKYSVWIGGSILASLSTFQQMWITKQEYDEAGPSIVHRKCF</sequence>
<name>ACT2_XENLA</name>
<evidence type="ECO:0000250" key="1"/>
<evidence type="ECO:0000250" key="2">
    <source>
        <dbReference type="UniProtKB" id="P68137"/>
    </source>
</evidence>
<evidence type="ECO:0000269" key="3">
    <source>
    </source>
</evidence>
<evidence type="ECO:0000269" key="4">
    <source>
    </source>
</evidence>
<evidence type="ECO:0000269" key="5">
    <source>
    </source>
</evidence>
<evidence type="ECO:0000305" key="6"/>
<protein>
    <recommendedName>
        <fullName>Actin, alpha skeletal muscle 2</fullName>
        <ecNumber evidence="2">3.6.4.-</ecNumber>
    </recommendedName>
    <alternativeName>
        <fullName>Actin alpha 2</fullName>
        <shortName>alpha2</shortName>
        <shortName>alpha2p</shortName>
    </alternativeName>
</protein>
<proteinExistence type="evidence at transcript level"/>
<keyword id="KW-0007">Acetylation</keyword>
<keyword id="KW-0067">ATP-binding</keyword>
<keyword id="KW-0963">Cytoplasm</keyword>
<keyword id="KW-0206">Cytoskeleton</keyword>
<keyword id="KW-0378">Hydrolase</keyword>
<keyword id="KW-0488">Methylation</keyword>
<keyword id="KW-0514">Muscle protein</keyword>
<keyword id="KW-0547">Nucleotide-binding</keyword>
<keyword id="KW-0558">Oxidation</keyword>
<keyword id="KW-1185">Reference proteome</keyword>
<comment type="function">
    <text>Actins are highly conserved proteins that are involved in various types of cell motility.</text>
</comment>
<comment type="catalytic activity">
    <reaction evidence="2">
        <text>ATP + H2O = ADP + phosphate + H(+)</text>
        <dbReference type="Rhea" id="RHEA:13065"/>
        <dbReference type="ChEBI" id="CHEBI:15377"/>
        <dbReference type="ChEBI" id="CHEBI:15378"/>
        <dbReference type="ChEBI" id="CHEBI:30616"/>
        <dbReference type="ChEBI" id="CHEBI:43474"/>
        <dbReference type="ChEBI" id="CHEBI:456216"/>
    </reaction>
</comment>
<comment type="subunit">
    <text>Polymerization of globular actin (G-actin) leads to a structural filament (F-actin) in the form of a two-stranded helix. Each actin can bind to 4 others.</text>
</comment>
<comment type="subcellular location">
    <subcellularLocation>
        <location>Cytoplasm</location>
        <location>Cytoskeleton</location>
    </subcellularLocation>
</comment>
<comment type="tissue specificity">
    <text evidence="3 4 5">Shows overlapping but distinct expression patterns with other Xenopus laevis actins. In tailbud embryos, expressed in embryonic muscle (myotomes). In tadpoles, abundant in muscle from the tadpole tail with minor expression in the heart and limb buds. In adults, expressed mainly in skeletal muscle.</text>
</comment>
<comment type="developmental stage">
    <text evidence="5">Expressed from the end of gastrulation.</text>
</comment>
<comment type="PTM">
    <text evidence="1">Oxidation of Met-46 and Met-49 by MICALs (mical1, mical2 or mical3) to form methionine sulfoxide promotes actin filament depolymerization. Mical1 and mical2 produce the (R)-S-oxide form. The (R)-S-oxide form is reverted by msrb1 and msrb2, which promote actin repolymerization (By similarity).</text>
</comment>
<comment type="miscellaneous">
    <text>Xenopus contains at least three sarcomeric alpha actin genes that are preferentially expressed in either heart or skeletal muscle. Due to the tetraploid nature of Xenopus laevis, each of these three alpha actin genes is present in at least two copies.</text>
</comment>
<comment type="miscellaneous">
    <text>The cardiac versus skeletal expression patterns of actins are probably sequence-dependent. For example, cardiac actins contain a Glu at position 3 of the mature peptide, whereas skeletal actins contain an Asp at this position.</text>
</comment>
<comment type="similarity">
    <text evidence="6">Belongs to the actin family.</text>
</comment>
<gene>
    <name type="primary">act2</name>
</gene>
<organism>
    <name type="scientific">Xenopus laevis</name>
    <name type="common">African clawed frog</name>
    <dbReference type="NCBI Taxonomy" id="8355"/>
    <lineage>
        <taxon>Eukaryota</taxon>
        <taxon>Metazoa</taxon>
        <taxon>Chordata</taxon>
        <taxon>Craniata</taxon>
        <taxon>Vertebrata</taxon>
        <taxon>Euteleostomi</taxon>
        <taxon>Amphibia</taxon>
        <taxon>Batrachia</taxon>
        <taxon>Anura</taxon>
        <taxon>Pipoidea</taxon>
        <taxon>Pipidae</taxon>
        <taxon>Xenopodinae</taxon>
        <taxon>Xenopus</taxon>
        <taxon>Xenopus</taxon>
    </lineage>
</organism>
<accession>P10995</accession>
<accession>A9ULV6</accession>
<accession>Q6GNN1</accession>
<reference key="1">
    <citation type="journal article" date="1987" name="EMBO J.">
        <title>A processed gene coding for a sarcomeric actin in Xenopus laevis and Xenopus tropicalis.</title>
        <authorList>
            <person name="Stutz F."/>
            <person name="Spohr G."/>
        </authorList>
    </citation>
    <scope>NUCLEOTIDE SEQUENCE [GENOMIC DNA]</scope>
    <scope>TISSUE SPECIFICITY</scope>
</reference>
<reference key="2">
    <citation type="submission" date="2007-12" db="EMBL/GenBank/DDBJ databases">
        <authorList>
            <consortium name="NIH - Xenopus Gene Collection (XGC) project"/>
        </authorList>
    </citation>
    <scope>NUCLEOTIDE SEQUENCE [LARGE SCALE MRNA]</scope>
    <source>
        <tissue>Tail bud</tissue>
    </source>
</reference>
<reference key="3">
    <citation type="journal article" date="1986" name="J. Mol. Biol.">
        <title>Isolation and characterization of sarcomeric actin genes expressed in Xenopus laevis embryos.</title>
        <authorList>
            <person name="Stutz F."/>
            <person name="Spohr G."/>
        </authorList>
    </citation>
    <scope>NUCLEOTIDE SEQUENCE [GENOMIC DNA] OF 1-43</scope>
</reference>
<reference key="4">
    <citation type="journal article" date="1984" name="Nature">
        <title>Cell type-specific activation of actin genes in the early amphibian embryo.</title>
        <authorList>
            <person name="Mohun T.J."/>
            <person name="Brennan S."/>
            <person name="Dathan N."/>
            <person name="Fairman S."/>
            <person name="Gurdon J.B."/>
        </authorList>
    </citation>
    <scope>TISSUE SPECIFICITY</scope>
    <scope>DEVELOPMENTAL STAGE</scope>
</reference>
<reference key="5">
    <citation type="journal article" date="1988" name="J. Mol. Biol.">
        <title>A third striated muscle actin gene is expressed during early development in the amphibian Xenopus laevis.</title>
        <authorList>
            <person name="Mohun T.J."/>
            <person name="Garrett N."/>
            <person name="Stutz F."/>
            <person name="Spohr G."/>
        </authorList>
    </citation>
    <scope>TISSUE SPECIFICITY</scope>
</reference>